<reference key="1">
    <citation type="journal article" date="2005" name="Plant Mol. Biol.">
        <title>An annotation update via cDNA sequence analysis and comprehensive profiling of developmental, hormonal or environmental responsiveness of the Arabidopsis AP2/EREBP transcription factor gene family.</title>
        <authorList>
            <person name="Feng J.-X."/>
            <person name="Liu D."/>
            <person name="Pan Y."/>
            <person name="Gong W."/>
            <person name="Ma L.-G."/>
            <person name="Luo J.-C."/>
            <person name="Deng X.-W."/>
            <person name="Zhu Y.-X."/>
        </authorList>
    </citation>
    <scope>NUCLEOTIDE SEQUENCE [MRNA]</scope>
    <scope>TISSUE SPECIFICITY</scope>
    <scope>INDUCTION BY DROUGHT</scope>
    <source>
        <strain>cv. Columbia</strain>
    </source>
</reference>
<reference key="2">
    <citation type="journal article" date="1999" name="Nature">
        <title>Sequence and analysis of chromosome 2 of the plant Arabidopsis thaliana.</title>
        <authorList>
            <person name="Lin X."/>
            <person name="Kaul S."/>
            <person name="Rounsley S.D."/>
            <person name="Shea T.P."/>
            <person name="Benito M.-I."/>
            <person name="Town C.D."/>
            <person name="Fujii C.Y."/>
            <person name="Mason T.M."/>
            <person name="Bowman C.L."/>
            <person name="Barnstead M.E."/>
            <person name="Feldblyum T.V."/>
            <person name="Buell C.R."/>
            <person name="Ketchum K.A."/>
            <person name="Lee J.J."/>
            <person name="Ronning C.M."/>
            <person name="Koo H.L."/>
            <person name="Moffat K.S."/>
            <person name="Cronin L.A."/>
            <person name="Shen M."/>
            <person name="Pai G."/>
            <person name="Van Aken S."/>
            <person name="Umayam L."/>
            <person name="Tallon L.J."/>
            <person name="Gill J.E."/>
            <person name="Adams M.D."/>
            <person name="Carrera A.J."/>
            <person name="Creasy T.H."/>
            <person name="Goodman H.M."/>
            <person name="Somerville C.R."/>
            <person name="Copenhaver G.P."/>
            <person name="Preuss D."/>
            <person name="Nierman W.C."/>
            <person name="White O."/>
            <person name="Eisen J.A."/>
            <person name="Salzberg S.L."/>
            <person name="Fraser C.M."/>
            <person name="Venter J.C."/>
        </authorList>
    </citation>
    <scope>NUCLEOTIDE SEQUENCE [LARGE SCALE GENOMIC DNA]</scope>
    <source>
        <strain>cv. Columbia</strain>
    </source>
</reference>
<reference key="3">
    <citation type="journal article" date="2017" name="Plant J.">
        <title>Araport11: a complete reannotation of the Arabidopsis thaliana reference genome.</title>
        <authorList>
            <person name="Cheng C.Y."/>
            <person name="Krishnakumar V."/>
            <person name="Chan A.P."/>
            <person name="Thibaud-Nissen F."/>
            <person name="Schobel S."/>
            <person name="Town C.D."/>
        </authorList>
    </citation>
    <scope>GENOME REANNOTATION</scope>
    <source>
        <strain>cv. Columbia</strain>
    </source>
</reference>
<reference key="4">
    <citation type="submission" date="2004-04" db="EMBL/GenBank/DDBJ databases">
        <title>Reconstruction of cDNA sequences for hypothetical genes in Arabidopsis thaliana from 5' and 3' RACE products.</title>
        <authorList>
            <person name="Xiao Y.-L."/>
            <person name="Underwood B.A."/>
            <person name="Moskal W.A. Jr."/>
            <person name="Torian U."/>
            <person name="Redman J.C."/>
            <person name="Wu H.C."/>
            <person name="Utterback T."/>
            <person name="Town C.D."/>
        </authorList>
    </citation>
    <scope>NUCLEOTIDE SEQUENCE [LARGE SCALE MRNA]</scope>
    <source>
        <strain>cv. Columbia</strain>
    </source>
</reference>
<reference key="5">
    <citation type="journal article" date="2003" name="Science">
        <title>Empirical analysis of transcriptional activity in the Arabidopsis genome.</title>
        <authorList>
            <person name="Yamada K."/>
            <person name="Lim J."/>
            <person name="Dale J.M."/>
            <person name="Chen H."/>
            <person name="Shinn P."/>
            <person name="Palm C.J."/>
            <person name="Southwick A.M."/>
            <person name="Wu H.C."/>
            <person name="Kim C.J."/>
            <person name="Nguyen M."/>
            <person name="Pham P.K."/>
            <person name="Cheuk R.F."/>
            <person name="Karlin-Newmann G."/>
            <person name="Liu S.X."/>
            <person name="Lam B."/>
            <person name="Sakano H."/>
            <person name="Wu T."/>
            <person name="Yu G."/>
            <person name="Miranda M."/>
            <person name="Quach H.L."/>
            <person name="Tripp M."/>
            <person name="Chang C.H."/>
            <person name="Lee J.M."/>
            <person name="Toriumi M.J."/>
            <person name="Chan M.M."/>
            <person name="Tang C.C."/>
            <person name="Onodera C.S."/>
            <person name="Deng J.M."/>
            <person name="Akiyama K."/>
            <person name="Ansari Y."/>
            <person name="Arakawa T."/>
            <person name="Banh J."/>
            <person name="Banno F."/>
            <person name="Bowser L."/>
            <person name="Brooks S.Y."/>
            <person name="Carninci P."/>
            <person name="Chao Q."/>
            <person name="Choy N."/>
            <person name="Enju A."/>
            <person name="Goldsmith A.D."/>
            <person name="Gurjal M."/>
            <person name="Hansen N.F."/>
            <person name="Hayashizaki Y."/>
            <person name="Johnson-Hopson C."/>
            <person name="Hsuan V.W."/>
            <person name="Iida K."/>
            <person name="Karnes M."/>
            <person name="Khan S."/>
            <person name="Koesema E."/>
            <person name="Ishida J."/>
            <person name="Jiang P.X."/>
            <person name="Jones T."/>
            <person name="Kawai J."/>
            <person name="Kamiya A."/>
            <person name="Meyers C."/>
            <person name="Nakajima M."/>
            <person name="Narusaka M."/>
            <person name="Seki M."/>
            <person name="Sakurai T."/>
            <person name="Satou M."/>
            <person name="Tamse R."/>
            <person name="Vaysberg M."/>
            <person name="Wallender E.K."/>
            <person name="Wong C."/>
            <person name="Yamamura Y."/>
            <person name="Yuan S."/>
            <person name="Shinozaki K."/>
            <person name="Davis R.W."/>
            <person name="Theologis A."/>
            <person name="Ecker J.R."/>
        </authorList>
    </citation>
    <scope>NUCLEOTIDE SEQUENCE [LARGE SCALE MRNA] OF 38-225</scope>
    <source>
        <strain>cv. Columbia</strain>
    </source>
</reference>
<reference key="6">
    <citation type="submission" date="2004-02" db="EMBL/GenBank/DDBJ databases">
        <title>Molecular cloning, expression, phylogenetic and functional characterization of the Arabidopsis AP2/EREBP transcription factor family.</title>
        <authorList>
            <person name="Pan Y."/>
            <person name="Gong W."/>
            <person name="Liu D."/>
            <person name="Fu Q."/>
            <person name="Mei W.-Q."/>
            <person name="Song W.-Q."/>
            <person name="Ma L.-G."/>
            <person name="Luo J.-C."/>
            <person name="Deng X.-W."/>
            <person name="Zhu Y.-X."/>
        </authorList>
    </citation>
    <scope>NUCLEOTIDE SEQUENCE [MRNA] OF 60-225</scope>
</reference>
<reference key="7">
    <citation type="submission" date="2005-02" db="EMBL/GenBank/DDBJ databases">
        <authorList>
            <person name="Underwood B.A."/>
            <person name="Xiao Y.-L."/>
            <person name="Moskal W.A. Jr."/>
            <person name="Monaghan E.L."/>
            <person name="Wang W."/>
            <person name="Redman J.C."/>
            <person name="Wu H.C."/>
            <person name="Utterback T."/>
            <person name="Town C.D."/>
        </authorList>
    </citation>
    <scope>NUCLEOTIDE SEQUENCE [LARGE SCALE GENOMIC DNA] OF 60-225</scope>
    <source>
        <strain>cv. Columbia</strain>
    </source>
</reference>
<reference key="8">
    <citation type="journal article" date="2006" name="Plant Physiol.">
        <title>Genome-wide analysis of the ERF gene family in Arabidopsis and rice.</title>
        <authorList>
            <person name="Nakano T."/>
            <person name="Suzuki K."/>
            <person name="Fujimura T."/>
            <person name="Shinshi H."/>
        </authorList>
    </citation>
    <scope>GENE FAMILY</scope>
    <scope>NOMENCLATURE</scope>
</reference>
<organism>
    <name type="scientific">Arabidopsis thaliana</name>
    <name type="common">Mouse-ear cress</name>
    <dbReference type="NCBI Taxonomy" id="3702"/>
    <lineage>
        <taxon>Eukaryota</taxon>
        <taxon>Viridiplantae</taxon>
        <taxon>Streptophyta</taxon>
        <taxon>Embryophyta</taxon>
        <taxon>Tracheophyta</taxon>
        <taxon>Spermatophyta</taxon>
        <taxon>Magnoliopsida</taxon>
        <taxon>eudicotyledons</taxon>
        <taxon>Gunneridae</taxon>
        <taxon>Pentapetalae</taxon>
        <taxon>rosids</taxon>
        <taxon>malvids</taxon>
        <taxon>Brassicales</taxon>
        <taxon>Brassicaceae</taxon>
        <taxon>Camelineae</taxon>
        <taxon>Arabidopsis</taxon>
    </lineage>
</organism>
<evidence type="ECO:0000250" key="1"/>
<evidence type="ECO:0000250" key="2">
    <source>
        <dbReference type="UniProtKB" id="P42736"/>
    </source>
</evidence>
<evidence type="ECO:0000255" key="3">
    <source>
        <dbReference type="PROSITE-ProRule" id="PRU00366"/>
    </source>
</evidence>
<evidence type="ECO:0000256" key="4">
    <source>
        <dbReference type="SAM" id="MobiDB-lite"/>
    </source>
</evidence>
<evidence type="ECO:0000269" key="5">
    <source>
    </source>
</evidence>
<evidence type="ECO:0000305" key="6"/>
<sequence length="225" mass="24865">MVDSHGSDTECSSKKKKEKTKEKGVYRGARMRSWGKWVSEIREPRKKSRIWLGTFPTAEMAARAHDVAALSIKGSSAILNFPELADFLPRPVSLSQQDIQAAAAEAALMDFKTVPFHLQDDSTPLQTRCDTEKIEKWSSSSSSASSSSSSSSSSSSSMLSGELGDIVELPSLENNVKYDCALYDSLEGLVSMPPWLDATENDFRYGDDSVLLDPCLKESFLWNYE</sequence>
<gene>
    <name type="primary">ERF042</name>
    <name type="ordered locus">At2g25820</name>
    <name type="ORF">F17H15.15</name>
</gene>
<protein>
    <recommendedName>
        <fullName>Ethylene-responsive transcription factor ERF042</fullName>
    </recommendedName>
</protein>
<keyword id="KW-0010">Activator</keyword>
<keyword id="KW-0238">DNA-binding</keyword>
<keyword id="KW-0936">Ethylene signaling pathway</keyword>
<keyword id="KW-0539">Nucleus</keyword>
<keyword id="KW-0597">Phosphoprotein</keyword>
<keyword id="KW-1185">Reference proteome</keyword>
<keyword id="KW-0804">Transcription</keyword>
<keyword id="KW-0805">Transcription regulation</keyword>
<accession>Q52QU1</accession>
<accession>O82315</accession>
<accession>Q6E268</accession>
<accession>Q6J9Q5</accession>
<accession>Q94K31</accession>
<dbReference type="EMBL" id="AY974198">
    <property type="protein sequence ID" value="AAX89124.1"/>
    <property type="molecule type" value="mRNA"/>
</dbReference>
<dbReference type="EMBL" id="AC005395">
    <property type="protein sequence ID" value="AAC42248.2"/>
    <property type="status" value="ALT_INIT"/>
    <property type="molecule type" value="Genomic_DNA"/>
</dbReference>
<dbReference type="EMBL" id="CP002685">
    <property type="protein sequence ID" value="AEC07756.1"/>
    <property type="molecule type" value="Genomic_DNA"/>
</dbReference>
<dbReference type="EMBL" id="AY600555">
    <property type="protein sequence ID" value="AAT68354.1"/>
    <property type="status" value="ALT_SEQ"/>
    <property type="molecule type" value="mRNA"/>
</dbReference>
<dbReference type="EMBL" id="AF370341">
    <property type="protein sequence ID" value="AAK44156.1"/>
    <property type="status" value="ALT_INIT"/>
    <property type="molecule type" value="mRNA"/>
</dbReference>
<dbReference type="EMBL" id="AY063000">
    <property type="protein sequence ID" value="AAL34174.1"/>
    <property type="molecule type" value="mRNA"/>
</dbReference>
<dbReference type="EMBL" id="AY560870">
    <property type="protein sequence ID" value="AAT44937.1"/>
    <property type="molecule type" value="mRNA"/>
</dbReference>
<dbReference type="EMBL" id="AY924749">
    <property type="protein sequence ID" value="AAX23824.1"/>
    <property type="molecule type" value="Genomic_DNA"/>
</dbReference>
<dbReference type="PIR" id="B84653">
    <property type="entry name" value="B84653"/>
</dbReference>
<dbReference type="SMR" id="Q52QU1"/>
<dbReference type="BioGRID" id="2476">
    <property type="interactions" value="3"/>
</dbReference>
<dbReference type="IntAct" id="Q52QU1">
    <property type="interactions" value="3"/>
</dbReference>
<dbReference type="STRING" id="3702.Q52QU1"/>
<dbReference type="PaxDb" id="3702-AT2G25820.1"/>
<dbReference type="EnsemblPlants" id="AT2G25820.1">
    <property type="protein sequence ID" value="AT2G25820.1"/>
    <property type="gene ID" value="AT2G25820"/>
</dbReference>
<dbReference type="GeneID" id="817124"/>
<dbReference type="Gramene" id="AT2G25820.1">
    <property type="protein sequence ID" value="AT2G25820.1"/>
    <property type="gene ID" value="AT2G25820"/>
</dbReference>
<dbReference type="KEGG" id="ath:AT2G25820"/>
<dbReference type="Araport" id="AT2G25820"/>
<dbReference type="TAIR" id="AT2G25820">
    <property type="gene designation" value="ESE2"/>
</dbReference>
<dbReference type="eggNOG" id="ENOG502QW5S">
    <property type="taxonomic scope" value="Eukaryota"/>
</dbReference>
<dbReference type="HOGENOM" id="CLU_063331_3_2_1"/>
<dbReference type="InParanoid" id="Q52QU1"/>
<dbReference type="OMA" id="ESFLWNY"/>
<dbReference type="PhylomeDB" id="Q52QU1"/>
<dbReference type="PRO" id="PR:Q52QU1"/>
<dbReference type="Proteomes" id="UP000006548">
    <property type="component" value="Chromosome 2"/>
</dbReference>
<dbReference type="ExpressionAtlas" id="Q52QU1">
    <property type="expression patterns" value="baseline and differential"/>
</dbReference>
<dbReference type="GO" id="GO:0005634">
    <property type="term" value="C:nucleus"/>
    <property type="evidence" value="ECO:0007669"/>
    <property type="project" value="UniProtKB-SubCell"/>
</dbReference>
<dbReference type="GO" id="GO:0003677">
    <property type="term" value="F:DNA binding"/>
    <property type="evidence" value="ECO:0007669"/>
    <property type="project" value="UniProtKB-KW"/>
</dbReference>
<dbReference type="GO" id="GO:0003700">
    <property type="term" value="F:DNA-binding transcription factor activity"/>
    <property type="evidence" value="ECO:0000250"/>
    <property type="project" value="TAIR"/>
</dbReference>
<dbReference type="GO" id="GO:0009873">
    <property type="term" value="P:ethylene-activated signaling pathway"/>
    <property type="evidence" value="ECO:0007669"/>
    <property type="project" value="UniProtKB-KW"/>
</dbReference>
<dbReference type="CDD" id="cd00018">
    <property type="entry name" value="AP2"/>
    <property type="match status" value="1"/>
</dbReference>
<dbReference type="FunFam" id="3.30.730.10:FF:000001">
    <property type="entry name" value="Ethylene-responsive transcription factor 2"/>
    <property type="match status" value="1"/>
</dbReference>
<dbReference type="Gene3D" id="3.30.730.10">
    <property type="entry name" value="AP2/ERF domain"/>
    <property type="match status" value="1"/>
</dbReference>
<dbReference type="InterPro" id="IPR001471">
    <property type="entry name" value="AP2/ERF_dom"/>
</dbReference>
<dbReference type="InterPro" id="IPR036955">
    <property type="entry name" value="AP2/ERF_dom_sf"/>
</dbReference>
<dbReference type="InterPro" id="IPR051032">
    <property type="entry name" value="AP2/ERF_TF_ERF_subfamily"/>
</dbReference>
<dbReference type="InterPro" id="IPR016177">
    <property type="entry name" value="DNA-bd_dom_sf"/>
</dbReference>
<dbReference type="PANTHER" id="PTHR31985:SF232">
    <property type="entry name" value="ETHYLENE-RESPONSIVE TRANSCRIPTION FACTOR ERF042"/>
    <property type="match status" value="1"/>
</dbReference>
<dbReference type="PANTHER" id="PTHR31985">
    <property type="entry name" value="ETHYLENE-RESPONSIVE TRANSCRIPTION FACTOR ERF042-RELATED"/>
    <property type="match status" value="1"/>
</dbReference>
<dbReference type="Pfam" id="PF00847">
    <property type="entry name" value="AP2"/>
    <property type="match status" value="1"/>
</dbReference>
<dbReference type="PRINTS" id="PR00367">
    <property type="entry name" value="ETHRSPELEMNT"/>
</dbReference>
<dbReference type="SMART" id="SM00380">
    <property type="entry name" value="AP2"/>
    <property type="match status" value="1"/>
</dbReference>
<dbReference type="SUPFAM" id="SSF54171">
    <property type="entry name" value="DNA-binding domain"/>
    <property type="match status" value="1"/>
</dbReference>
<dbReference type="PROSITE" id="PS51032">
    <property type="entry name" value="AP2_ERF"/>
    <property type="match status" value="1"/>
</dbReference>
<comment type="function">
    <text evidence="1">Probably acts as a transcriptional activator. Binds to the GCC-box pathogenesis-related promoter element. May be involved in the regulation of gene expression by stress factors and by components of stress signal transduction pathways (By similarity).</text>
</comment>
<comment type="subcellular location">
    <subcellularLocation>
        <location evidence="6">Nucleus</location>
    </subcellularLocation>
</comment>
<comment type="tissue specificity">
    <text evidence="5">Expressed in roots, stems, seeds and stamen.</text>
</comment>
<comment type="induction">
    <text evidence="5">By drought.</text>
</comment>
<comment type="similarity">
    <text evidence="6">Belongs to the AP2/ERF transcription factor family. ERF subfamily.</text>
</comment>
<comment type="sequence caution" evidence="6">
    <conflict type="erroneous initiation">
        <sequence resource="EMBL-CDS" id="AAC42248"/>
    </conflict>
</comment>
<comment type="sequence caution" evidence="6">
    <conflict type="erroneous initiation">
        <sequence resource="EMBL-CDS" id="AAK44156"/>
    </conflict>
</comment>
<comment type="sequence caution" evidence="6">
    <conflict type="erroneous termination">
        <sequence resource="EMBL-CDS" id="AAT68354"/>
    </conflict>
    <text>Truncated C-terminus.</text>
</comment>
<feature type="chain" id="PRO_0000297925" description="Ethylene-responsive transcription factor ERF042">
    <location>
        <begin position="1"/>
        <end position="225"/>
    </location>
</feature>
<feature type="DNA-binding region" description="AP2/ERF" evidence="3">
    <location>
        <begin position="25"/>
        <end position="82"/>
    </location>
</feature>
<feature type="region of interest" description="Disordered" evidence="4">
    <location>
        <begin position="1"/>
        <end position="26"/>
    </location>
</feature>
<feature type="region of interest" description="Disordered" evidence="4">
    <location>
        <begin position="134"/>
        <end position="157"/>
    </location>
</feature>
<feature type="compositionally biased region" description="Basic and acidic residues" evidence="4">
    <location>
        <begin position="1"/>
        <end position="25"/>
    </location>
</feature>
<feature type="compositionally biased region" description="Low complexity" evidence="4">
    <location>
        <begin position="138"/>
        <end position="157"/>
    </location>
</feature>
<feature type="modified residue" description="Phosphoserine" evidence="2">
    <location>
        <position position="95"/>
    </location>
</feature>
<feature type="sequence conflict" description="In Ref. 4; AAT44937." evidence="6" ref="4">
    <original>S</original>
    <variation>P</variation>
    <location>
        <position position="157"/>
    </location>
</feature>
<name>ERF42_ARATH</name>
<proteinExistence type="evidence at transcript level"/>